<evidence type="ECO:0000255" key="1">
    <source>
        <dbReference type="PROSITE-ProRule" id="PRU00332"/>
    </source>
</evidence>
<evidence type="ECO:0000256" key="2">
    <source>
        <dbReference type="SAM" id="MobiDB-lite"/>
    </source>
</evidence>
<evidence type="ECO:0000269" key="3">
    <source>
    </source>
</evidence>
<evidence type="ECO:0000269" key="4">
    <source>
    </source>
</evidence>
<evidence type="ECO:0000269" key="5">
    <source>
    </source>
</evidence>
<evidence type="ECO:0000269" key="6">
    <source>
    </source>
</evidence>
<evidence type="ECO:0000269" key="7">
    <source ref="6"/>
</evidence>
<evidence type="ECO:0000303" key="8">
    <source>
    </source>
</evidence>
<evidence type="ECO:0000303" key="9">
    <source>
    </source>
</evidence>
<evidence type="ECO:0000303" key="10">
    <source>
    </source>
</evidence>
<evidence type="ECO:0000305" key="11"/>
<evidence type="ECO:0007744" key="12">
    <source>
    </source>
</evidence>
<evidence type="ECO:0007744" key="13">
    <source>
    </source>
</evidence>
<evidence type="ECO:0007744" key="14">
    <source>
    </source>
</evidence>
<evidence type="ECO:0007744" key="15">
    <source>
    </source>
</evidence>
<evidence type="ECO:0007744" key="16">
    <source>
    </source>
</evidence>
<evidence type="ECO:0007744" key="17">
    <source>
    </source>
</evidence>
<evidence type="ECO:0007744" key="18">
    <source>
    </source>
</evidence>
<evidence type="ECO:0007744" key="19">
    <source>
    </source>
</evidence>
<evidence type="ECO:0007744" key="20">
    <source>
    </source>
</evidence>
<evidence type="ECO:0007829" key="21">
    <source>
        <dbReference type="PDB" id="2CQK"/>
    </source>
</evidence>
<evidence type="ECO:0007829" key="22">
    <source>
        <dbReference type="PDB" id="6I9B"/>
    </source>
</evidence>
<sequence length="724" mass="80596">MLLFVEQVASKGTGLNPNAKVWQEIAPGNTDATPVTHGTESSWHEIAATSGAHPEGNAELSEDICKEYEVMYSSSCETTRNTTGIEESTDGMILGPEDLSYQIYDVSGESNSAVSTEDLKECLKKQLEFCFSRENLSKDLYLISQMDSDQFIPIWTVANMEEIKKLTTDPDLILEVLRSSPMVQVDEKGEKVRPSHKRCIVILREIPETTPIEEVKGLFKSENCPKVISCEFAHNSNWYITFQSDTDAQQAFKYLREEVKTFQGKPIMARIKAINTFFAKNGYRLMDSSIYSHPIQTQAQYASPVFMQPVYNPHQQYSVYSIVPQSWSPNPTPYFETPLAPFPNGSFVNGFNSPGSYKTNAAAMNMGRPFQKNRVKPQFRSSGGSEHSTEGSVSLGDGQLNRYSSRNFPAERHNPTVTGHQEQTYLQKETSTLQVEQNGDYGRGRRTLFRGRRRREDDRISRPHPSTAESKAPTPKFDLLASNFPPLPGSSSRMPGELVLENRMSDVVKGVYKEKDNEELTISCPVPADEQTECTSAQQLNMSTSSPCAAELTALSTTQQEKDLIEDSSVQKDGLNQTTIPVSPPSTTKPSRASTASPCNNNINAATAVALQEPRKLSYAEVCQKPPKEPSSVLVQPLRELRSNVVSPTKNEDNGAPENSVEKPHEKPEARASKDYSGFRGNIIPRGAAGKIREQRRQFSHRAIPQGVTRRNGKEQYVPPRSPK</sequence>
<accession>Q71RC2</accession>
<accession>A8K6T1</accession>
<accession>E9PDG5</accession>
<accession>G3XAA8</accession>
<accession>G5E976</accession>
<accession>Q5CZ97</accession>
<accession>Q6ZV14</accession>
<accession>Q96NF9</accession>
<feature type="chain" id="PRO_0000207611" description="La-related protein 4">
    <location>
        <begin position="1"/>
        <end position="724"/>
    </location>
</feature>
<feature type="domain" description="HTH La-type RNA-binding" evidence="1">
    <location>
        <begin position="113"/>
        <end position="202"/>
    </location>
</feature>
<feature type="domain" description="RRM">
    <location>
        <begin position="203"/>
        <end position="281"/>
    </location>
</feature>
<feature type="region of interest" description="Interaction with PABPC1" evidence="4">
    <location>
        <begin position="13"/>
        <end position="22"/>
    </location>
</feature>
<feature type="region of interest" description="Interaction with the poly-A tract of mRNA" evidence="4">
    <location>
        <begin position="111"/>
        <end position="303"/>
    </location>
</feature>
<feature type="region of interest" description="Disordered" evidence="2">
    <location>
        <begin position="374"/>
        <end position="477"/>
    </location>
</feature>
<feature type="region of interest" description="Disordered" evidence="2">
    <location>
        <begin position="568"/>
        <end position="600"/>
    </location>
</feature>
<feature type="region of interest" description="Disordered" evidence="2">
    <location>
        <begin position="623"/>
        <end position="724"/>
    </location>
</feature>
<feature type="compositionally biased region" description="Low complexity" evidence="2">
    <location>
        <begin position="381"/>
        <end position="394"/>
    </location>
</feature>
<feature type="compositionally biased region" description="Polar residues" evidence="2">
    <location>
        <begin position="415"/>
        <end position="437"/>
    </location>
</feature>
<feature type="compositionally biased region" description="Basic residues" evidence="2">
    <location>
        <begin position="444"/>
        <end position="453"/>
    </location>
</feature>
<feature type="compositionally biased region" description="Polar residues" evidence="2">
    <location>
        <begin position="574"/>
        <end position="600"/>
    </location>
</feature>
<feature type="compositionally biased region" description="Basic and acidic residues" evidence="2">
    <location>
        <begin position="660"/>
        <end position="674"/>
    </location>
</feature>
<feature type="modified residue" description="N-acetylmethionine" evidence="7 14">
    <location>
        <position position="1"/>
    </location>
</feature>
<feature type="modified residue" description="Omega-N-methylarginine" evidence="19">
    <location>
        <position position="368"/>
    </location>
</feature>
<feature type="modified residue" description="Phosphoserine" evidence="13 15 18">
    <location>
        <position position="392"/>
    </location>
</feature>
<feature type="modified residue" description="Phosphoserine" evidence="18">
    <location>
        <position position="505"/>
    </location>
</feature>
<feature type="modified residue" description="Phosphothreonine" evidence="20">
    <location>
        <position position="578"/>
    </location>
</feature>
<feature type="modified residue" description="Phosphothreonine" evidence="20">
    <location>
        <position position="579"/>
    </location>
</feature>
<feature type="modified residue" description="Phosphoserine" evidence="13 16 17 18">
    <location>
        <position position="583"/>
    </location>
</feature>
<feature type="modified residue" description="Phosphoserine" evidence="18">
    <location>
        <position position="597"/>
    </location>
</feature>
<feature type="modified residue" description="Phosphoserine" evidence="17">
    <location>
        <position position="647"/>
    </location>
</feature>
<feature type="modified residue" description="Phosphothreonine" evidence="17">
    <location>
        <position position="649"/>
    </location>
</feature>
<feature type="modified residue" description="Omega-N-methylarginine" evidence="19">
    <location>
        <position position="686"/>
    </location>
</feature>
<feature type="modified residue" description="Phosphoserine" evidence="12 13 16 18 20">
    <location>
        <position position="722"/>
    </location>
</feature>
<feature type="splice variant" id="VSP_033811" description="In isoform 2 and isoform 3." evidence="8 9">
    <location>
        <position position="7"/>
    </location>
</feature>
<feature type="splice variant" id="VSP_033812" description="In isoform 4." evidence="8">
    <original>E</original>
    <variation>EVSVFNT</variation>
    <location>
        <position position="55"/>
    </location>
</feature>
<feature type="splice variant" id="VSP_014611" description="In isoform 2." evidence="8">
    <location>
        <begin position="97"/>
        <end position="194"/>
    </location>
</feature>
<feature type="splice variant" id="VSP_045677" description="In isoform 5." evidence="10">
    <location>
        <begin position="269"/>
        <end position="339"/>
    </location>
</feature>
<feature type="splice variant" id="VSP_046780" description="In isoform 6." evidence="11">
    <location>
        <begin position="374"/>
        <end position="444"/>
    </location>
</feature>
<feature type="splice variant" id="VSP_046781" description="In isoform 7." evidence="11">
    <location>
        <begin position="446"/>
        <end position="724"/>
    </location>
</feature>
<feature type="splice variant" id="VSP_014612" description="In isoform 2." evidence="8">
    <location>
        <begin position="593"/>
        <end position="612"/>
    </location>
</feature>
<feature type="sequence variant" id="VAR_055936" description="In dbSNP:rs17124706.">
    <original>F</original>
    <variation>L</variation>
    <location>
        <position position="351"/>
    </location>
</feature>
<feature type="sequence variant" id="VAR_055937" description="In dbSNP:rs17124715." evidence="3">
    <original>N</original>
    <variation>T</variation>
    <location>
        <position position="502"/>
    </location>
</feature>
<feature type="mutagenesis site" description="Nearly abolishes interaction with PABPC1; when associated with A-22." evidence="4">
    <original>L</original>
    <variation>A</variation>
    <location>
        <position position="15"/>
    </location>
</feature>
<feature type="mutagenesis site" description="Nearly abolishes interaction with PABPC1; when associated with A-15." evidence="4">
    <original>W</original>
    <variation>A</variation>
    <location>
        <position position="22"/>
    </location>
</feature>
<feature type="sequence conflict" description="In Ref. 3; BX647457." evidence="11" ref="3">
    <original>E</original>
    <variation>G</variation>
    <location>
        <position position="422"/>
    </location>
</feature>
<feature type="sequence conflict" description="In Ref. 3; BX647457." evidence="11" ref="3">
    <original>D</original>
    <variation>G</variation>
    <location>
        <position position="529"/>
    </location>
</feature>
<feature type="sequence conflict" description="In Ref. 1; BAF84435." evidence="11" ref="1">
    <original>R</original>
    <variation>Q</variation>
    <location>
        <position position="639"/>
    </location>
</feature>
<feature type="helix" evidence="21">
    <location>
        <begin position="116"/>
        <end position="130"/>
    </location>
</feature>
<feature type="helix" evidence="21">
    <location>
        <begin position="133"/>
        <end position="138"/>
    </location>
</feature>
<feature type="helix" evidence="21">
    <location>
        <begin position="140"/>
        <end position="145"/>
    </location>
</feature>
<feature type="helix" evidence="21">
    <location>
        <begin position="154"/>
        <end position="159"/>
    </location>
</feature>
<feature type="helix" evidence="21">
    <location>
        <begin position="161"/>
        <end position="166"/>
    </location>
</feature>
<feature type="helix" evidence="21">
    <location>
        <begin position="170"/>
        <end position="179"/>
    </location>
</feature>
<feature type="strand" evidence="21">
    <location>
        <begin position="180"/>
        <end position="185"/>
    </location>
</feature>
<feature type="strand" evidence="21">
    <location>
        <begin position="187"/>
        <end position="194"/>
    </location>
</feature>
<feature type="strand" evidence="22">
    <location>
        <begin position="200"/>
        <end position="203"/>
    </location>
</feature>
<feature type="helix" evidence="22">
    <location>
        <begin position="212"/>
        <end position="219"/>
    </location>
</feature>
<feature type="strand" evidence="22">
    <location>
        <begin position="222"/>
        <end position="224"/>
    </location>
</feature>
<feature type="strand" evidence="22">
    <location>
        <begin position="228"/>
        <end position="233"/>
    </location>
</feature>
<feature type="turn" evidence="22">
    <location>
        <begin position="234"/>
        <end position="236"/>
    </location>
</feature>
<feature type="strand" evidence="22">
    <location>
        <begin position="237"/>
        <end position="241"/>
    </location>
</feature>
<feature type="helix" evidence="22">
    <location>
        <begin position="245"/>
        <end position="258"/>
    </location>
</feature>
<feature type="strand" evidence="22">
    <location>
        <begin position="269"/>
        <end position="272"/>
    </location>
</feature>
<feature type="strand" evidence="22">
    <location>
        <begin position="277"/>
        <end position="279"/>
    </location>
</feature>
<comment type="function">
    <text evidence="4 5 6">RNA binding protein that binds to the poly-A tract of mRNA molecules (PubMed:21098120). Associates with the 40S ribosomal subunit and with polysomes (PubMed:21098120). Plays a role in the regulation of mRNA translation (PubMed:21098120). Plays a role in the regulation of cell morphology and cytoskeletal organization (PubMed:21834987, PubMed:27615744).</text>
</comment>
<comment type="subunit">
    <text evidence="4 6">Interacts (via N-terminal region) with PABPC1 (PubMed:21098120, PubMed:27615744). Interacts with RACK1 (PubMed:21098120).</text>
</comment>
<comment type="interaction">
    <interactant intactId="EBI-2878091">
        <id>Q71RC2</id>
    </interactant>
    <interactant intactId="EBI-5323863">
        <id>Q5S007</id>
        <label>LRRK2</label>
    </interactant>
    <organismsDiffer>false</organismsDiffer>
    <experiments>3</experiments>
</comment>
<comment type="interaction">
    <interactant intactId="EBI-2878091">
        <id>Q71RC2</id>
    </interactant>
    <interactant intactId="EBI-78579">
        <id>P06748</id>
        <label>NPM1</label>
    </interactant>
    <organismsDiffer>false</organismsDiffer>
    <experiments>3</experiments>
</comment>
<comment type="interaction">
    <interactant intactId="EBI-10255841">
        <id>Q71RC2-6</id>
    </interactant>
    <interactant intactId="EBI-711810">
        <id>O14503</id>
        <label>BHLHE40</label>
    </interactant>
    <organismsDiffer>false</organismsDiffer>
    <experiments>3</experiments>
</comment>
<comment type="interaction">
    <interactant intactId="EBI-10255841">
        <id>Q71RC2-6</id>
    </interactant>
    <interactant intactId="EBI-748171">
        <id>O43186</id>
        <label>CRX</label>
    </interactant>
    <organismsDiffer>false</organismsDiffer>
    <experiments>3</experiments>
</comment>
<comment type="subcellular location">
    <subcellularLocation>
        <location evidence="4">Cytoplasm</location>
        <location evidence="4">Stress granule</location>
    </subcellularLocation>
    <subcellularLocation>
        <location evidence="4 6">Cytoplasm</location>
        <location evidence="4 6">Cytosol</location>
    </subcellularLocation>
    <text evidence="4">Localized throughout the cytosol. Partially localized in stress granules in response to arsenite treatment.</text>
</comment>
<comment type="alternative products">
    <event type="alternative splicing"/>
    <isoform>
        <id>Q71RC2-1</id>
        <name>1</name>
        <sequence type="displayed"/>
    </isoform>
    <isoform>
        <id>Q71RC2-2</id>
        <name>2</name>
        <sequence type="described" ref="VSP_033811 VSP_014611 VSP_014612"/>
    </isoform>
    <isoform>
        <id>Q71RC2-3</id>
        <name>3</name>
        <sequence type="described" ref="VSP_033811"/>
    </isoform>
    <isoform>
        <id>Q71RC2-4</id>
        <name>4</name>
        <sequence type="described" ref="VSP_033812"/>
    </isoform>
    <isoform>
        <id>Q71RC2-5</id>
        <name>5</name>
        <sequence type="described" ref="VSP_045677"/>
    </isoform>
    <isoform>
        <id>Q71RC2-6</id>
        <name>6</name>
        <sequence type="described" ref="VSP_046780"/>
    </isoform>
    <isoform>
        <id>Q71RC2-7</id>
        <name>7</name>
        <sequence type="described" ref="VSP_046781"/>
    </isoform>
</comment>
<comment type="miscellaneous">
    <molecule>Isoform 3</molecule>
    <text evidence="11">May be due to competing acceptor splice site.</text>
</comment>
<comment type="sequence caution" evidence="11">
    <conflict type="erroneous initiation">
        <sequence resource="EMBL-CDS" id="BAC86052"/>
    </conflict>
    <text>Truncated N-terminus.</text>
</comment>
<proteinExistence type="evidence at protein level"/>
<gene>
    <name type="primary">LARP4</name>
    <name type="ORF">PP13296</name>
</gene>
<keyword id="KW-0002">3D-structure</keyword>
<keyword id="KW-0007">Acetylation</keyword>
<keyword id="KW-0025">Alternative splicing</keyword>
<keyword id="KW-0963">Cytoplasm</keyword>
<keyword id="KW-0903">Direct protein sequencing</keyword>
<keyword id="KW-0488">Methylation</keyword>
<keyword id="KW-0597">Phosphoprotein</keyword>
<keyword id="KW-0648">Protein biosynthesis</keyword>
<keyword id="KW-1267">Proteomics identification</keyword>
<keyword id="KW-1185">Reference proteome</keyword>
<keyword id="KW-0694">RNA-binding</keyword>
<reference key="1">
    <citation type="journal article" date="2004" name="Nat. Genet.">
        <title>Complete sequencing and characterization of 21,243 full-length human cDNAs.</title>
        <authorList>
            <person name="Ota T."/>
            <person name="Suzuki Y."/>
            <person name="Nishikawa T."/>
            <person name="Otsuki T."/>
            <person name="Sugiyama T."/>
            <person name="Irie R."/>
            <person name="Wakamatsu A."/>
            <person name="Hayashi K."/>
            <person name="Sato H."/>
            <person name="Nagai K."/>
            <person name="Kimura K."/>
            <person name="Makita H."/>
            <person name="Sekine M."/>
            <person name="Obayashi M."/>
            <person name="Nishi T."/>
            <person name="Shibahara T."/>
            <person name="Tanaka T."/>
            <person name="Ishii S."/>
            <person name="Yamamoto J."/>
            <person name="Saito K."/>
            <person name="Kawai Y."/>
            <person name="Isono Y."/>
            <person name="Nakamura Y."/>
            <person name="Nagahari K."/>
            <person name="Murakami K."/>
            <person name="Yasuda T."/>
            <person name="Iwayanagi T."/>
            <person name="Wagatsuma M."/>
            <person name="Shiratori A."/>
            <person name="Sudo H."/>
            <person name="Hosoiri T."/>
            <person name="Kaku Y."/>
            <person name="Kodaira H."/>
            <person name="Kondo H."/>
            <person name="Sugawara M."/>
            <person name="Takahashi M."/>
            <person name="Kanda K."/>
            <person name="Yokoi T."/>
            <person name="Furuya T."/>
            <person name="Kikkawa E."/>
            <person name="Omura Y."/>
            <person name="Abe K."/>
            <person name="Kamihara K."/>
            <person name="Katsuta N."/>
            <person name="Sato K."/>
            <person name="Tanikawa M."/>
            <person name="Yamazaki M."/>
            <person name="Ninomiya K."/>
            <person name="Ishibashi T."/>
            <person name="Yamashita H."/>
            <person name="Murakawa K."/>
            <person name="Fujimori K."/>
            <person name="Tanai H."/>
            <person name="Kimata M."/>
            <person name="Watanabe M."/>
            <person name="Hiraoka S."/>
            <person name="Chiba Y."/>
            <person name="Ishida S."/>
            <person name="Ono Y."/>
            <person name="Takiguchi S."/>
            <person name="Watanabe S."/>
            <person name="Yosida M."/>
            <person name="Hotuta T."/>
            <person name="Kusano J."/>
            <person name="Kanehori K."/>
            <person name="Takahashi-Fujii A."/>
            <person name="Hara H."/>
            <person name="Tanase T.-O."/>
            <person name="Nomura Y."/>
            <person name="Togiya S."/>
            <person name="Komai F."/>
            <person name="Hara R."/>
            <person name="Takeuchi K."/>
            <person name="Arita M."/>
            <person name="Imose N."/>
            <person name="Musashino K."/>
            <person name="Yuuki H."/>
            <person name="Oshima A."/>
            <person name="Sasaki N."/>
            <person name="Aotsuka S."/>
            <person name="Yoshikawa Y."/>
            <person name="Matsunawa H."/>
            <person name="Ichihara T."/>
            <person name="Shiohata N."/>
            <person name="Sano S."/>
            <person name="Moriya S."/>
            <person name="Momiyama H."/>
            <person name="Satoh N."/>
            <person name="Takami S."/>
            <person name="Terashima Y."/>
            <person name="Suzuki O."/>
            <person name="Nakagawa S."/>
            <person name="Senoh A."/>
            <person name="Mizoguchi H."/>
            <person name="Goto Y."/>
            <person name="Shimizu F."/>
            <person name="Wakebe H."/>
            <person name="Hishigaki H."/>
            <person name="Watanabe T."/>
            <person name="Sugiyama A."/>
            <person name="Takemoto M."/>
            <person name="Kawakami B."/>
            <person name="Yamazaki M."/>
            <person name="Watanabe K."/>
            <person name="Kumagai A."/>
            <person name="Itakura S."/>
            <person name="Fukuzumi Y."/>
            <person name="Fujimori Y."/>
            <person name="Komiyama M."/>
            <person name="Tashiro H."/>
            <person name="Tanigami A."/>
            <person name="Fujiwara T."/>
            <person name="Ono T."/>
            <person name="Yamada K."/>
            <person name="Fujii Y."/>
            <person name="Ozaki K."/>
            <person name="Hirao M."/>
            <person name="Ohmori Y."/>
            <person name="Kawabata A."/>
            <person name="Hikiji T."/>
            <person name="Kobatake N."/>
            <person name="Inagaki H."/>
            <person name="Ikema Y."/>
            <person name="Okamoto S."/>
            <person name="Okitani R."/>
            <person name="Kawakami T."/>
            <person name="Noguchi S."/>
            <person name="Itoh T."/>
            <person name="Shigeta K."/>
            <person name="Senba T."/>
            <person name="Matsumura K."/>
            <person name="Nakajima Y."/>
            <person name="Mizuno T."/>
            <person name="Morinaga M."/>
            <person name="Sasaki M."/>
            <person name="Togashi T."/>
            <person name="Oyama M."/>
            <person name="Hata H."/>
            <person name="Watanabe M."/>
            <person name="Komatsu T."/>
            <person name="Mizushima-Sugano J."/>
            <person name="Satoh T."/>
            <person name="Shirai Y."/>
            <person name="Takahashi Y."/>
            <person name="Nakagawa K."/>
            <person name="Okumura K."/>
            <person name="Nagase T."/>
            <person name="Nomura N."/>
            <person name="Kikuchi H."/>
            <person name="Masuho Y."/>
            <person name="Yamashita R."/>
            <person name="Nakai K."/>
            <person name="Yada T."/>
            <person name="Nakamura Y."/>
            <person name="Ohara O."/>
            <person name="Isogai T."/>
            <person name="Sugano S."/>
        </authorList>
    </citation>
    <scope>NUCLEOTIDE SEQUENCE [LARGE SCALE MRNA] (ISOFORMS 1 AND 2)</scope>
    <scope>NUCLEOTIDE SEQUENCE [LARGE SCALE MRNA] OF 10-724 (ISOFORM 4)</scope>
    <source>
        <tissue>Placenta</tissue>
        <tissue>Tongue</tissue>
    </source>
</reference>
<reference key="2">
    <citation type="journal article" date="2004" name="Proc. Natl. Acad. Sci. U.S.A.">
        <title>Large-scale cDNA transfection screening for genes related to cancer development and progression.</title>
        <authorList>
            <person name="Wan D."/>
            <person name="Gong Y."/>
            <person name="Qin W."/>
            <person name="Zhang P."/>
            <person name="Li J."/>
            <person name="Wei L."/>
            <person name="Zhou X."/>
            <person name="Li H."/>
            <person name="Qiu X."/>
            <person name="Zhong F."/>
            <person name="He L."/>
            <person name="Yu J."/>
            <person name="Yao G."/>
            <person name="Jiang H."/>
            <person name="Qian L."/>
            <person name="Yu Y."/>
            <person name="Shu H."/>
            <person name="Chen X."/>
            <person name="Xu H."/>
            <person name="Guo M."/>
            <person name="Pan Z."/>
            <person name="Chen Y."/>
            <person name="Ge C."/>
            <person name="Yang S."/>
            <person name="Gu J."/>
        </authorList>
    </citation>
    <scope>NUCLEOTIDE SEQUENCE [LARGE SCALE MRNA] (ISOFORM 3)</scope>
    <scope>VARIANT THR-502</scope>
</reference>
<reference key="3">
    <citation type="journal article" date="2007" name="BMC Genomics">
        <title>The full-ORF clone resource of the German cDNA consortium.</title>
        <authorList>
            <person name="Bechtel S."/>
            <person name="Rosenfelder H."/>
            <person name="Duda A."/>
            <person name="Schmidt C.P."/>
            <person name="Ernst U."/>
            <person name="Wellenreuther R."/>
            <person name="Mehrle A."/>
            <person name="Schuster C."/>
            <person name="Bahr A."/>
            <person name="Bloecker H."/>
            <person name="Heubner D."/>
            <person name="Hoerlein A."/>
            <person name="Michel G."/>
            <person name="Wedler H."/>
            <person name="Koehrer K."/>
            <person name="Ottenwaelder B."/>
            <person name="Poustka A."/>
            <person name="Wiemann S."/>
            <person name="Schupp I."/>
        </authorList>
    </citation>
    <scope>NUCLEOTIDE SEQUENCE [LARGE SCALE MRNA] (ISOFORMS 1 AND 5)</scope>
    <source>
        <tissue>Bone marrow</tissue>
        <tissue>Cervix</tissue>
    </source>
</reference>
<reference key="4">
    <citation type="journal article" date="2006" name="Nature">
        <title>The finished DNA sequence of human chromosome 12.</title>
        <authorList>
            <person name="Scherer S.E."/>
            <person name="Muzny D.M."/>
            <person name="Buhay C.J."/>
            <person name="Chen R."/>
            <person name="Cree A."/>
            <person name="Ding Y."/>
            <person name="Dugan-Rocha S."/>
            <person name="Gill R."/>
            <person name="Gunaratne P."/>
            <person name="Harris R.A."/>
            <person name="Hawes A.C."/>
            <person name="Hernandez J."/>
            <person name="Hodgson A.V."/>
            <person name="Hume J."/>
            <person name="Jackson A."/>
            <person name="Khan Z.M."/>
            <person name="Kovar-Smith C."/>
            <person name="Lewis L.R."/>
            <person name="Lozado R.J."/>
            <person name="Metzker M.L."/>
            <person name="Milosavljevic A."/>
            <person name="Miner G.R."/>
            <person name="Montgomery K.T."/>
            <person name="Morgan M.B."/>
            <person name="Nazareth L.V."/>
            <person name="Scott G."/>
            <person name="Sodergren E."/>
            <person name="Song X.-Z."/>
            <person name="Steffen D."/>
            <person name="Lovering R.C."/>
            <person name="Wheeler D.A."/>
            <person name="Worley K.C."/>
            <person name="Yuan Y."/>
            <person name="Zhang Z."/>
            <person name="Adams C.Q."/>
            <person name="Ansari-Lari M.A."/>
            <person name="Ayele M."/>
            <person name="Brown M.J."/>
            <person name="Chen G."/>
            <person name="Chen Z."/>
            <person name="Clerc-Blankenburg K.P."/>
            <person name="Davis C."/>
            <person name="Delgado O."/>
            <person name="Dinh H.H."/>
            <person name="Draper H."/>
            <person name="Gonzalez-Garay M.L."/>
            <person name="Havlak P."/>
            <person name="Jackson L.R."/>
            <person name="Jacob L.S."/>
            <person name="Kelly S.H."/>
            <person name="Li L."/>
            <person name="Li Z."/>
            <person name="Liu J."/>
            <person name="Liu W."/>
            <person name="Lu J."/>
            <person name="Maheshwari M."/>
            <person name="Nguyen B.-V."/>
            <person name="Okwuonu G.O."/>
            <person name="Pasternak S."/>
            <person name="Perez L.M."/>
            <person name="Plopper F.J.H."/>
            <person name="Santibanez J."/>
            <person name="Shen H."/>
            <person name="Tabor P.E."/>
            <person name="Verduzco D."/>
            <person name="Waldron L."/>
            <person name="Wang Q."/>
            <person name="Williams G.A."/>
            <person name="Zhang J."/>
            <person name="Zhou J."/>
            <person name="Allen C.C."/>
            <person name="Amin A.G."/>
            <person name="Anyalebechi V."/>
            <person name="Bailey M."/>
            <person name="Barbaria J.A."/>
            <person name="Bimage K.E."/>
            <person name="Bryant N.P."/>
            <person name="Burch P.E."/>
            <person name="Burkett C.E."/>
            <person name="Burrell K.L."/>
            <person name="Calderon E."/>
            <person name="Cardenas V."/>
            <person name="Carter K."/>
            <person name="Casias K."/>
            <person name="Cavazos I."/>
            <person name="Cavazos S.R."/>
            <person name="Ceasar H."/>
            <person name="Chacko J."/>
            <person name="Chan S.N."/>
            <person name="Chavez D."/>
            <person name="Christopoulos C."/>
            <person name="Chu J."/>
            <person name="Cockrell R."/>
            <person name="Cox C.D."/>
            <person name="Dang M."/>
            <person name="Dathorne S.R."/>
            <person name="David R."/>
            <person name="Davis C.M."/>
            <person name="Davy-Carroll L."/>
            <person name="Deshazo D.R."/>
            <person name="Donlin J.E."/>
            <person name="D'Souza L."/>
            <person name="Eaves K.A."/>
            <person name="Egan A."/>
            <person name="Emery-Cohen A.J."/>
            <person name="Escotto M."/>
            <person name="Flagg N."/>
            <person name="Forbes L.D."/>
            <person name="Gabisi A.M."/>
            <person name="Garza M."/>
            <person name="Hamilton C."/>
            <person name="Henderson N."/>
            <person name="Hernandez O."/>
            <person name="Hines S."/>
            <person name="Hogues M.E."/>
            <person name="Huang M."/>
            <person name="Idlebird D.G."/>
            <person name="Johnson R."/>
            <person name="Jolivet A."/>
            <person name="Jones S."/>
            <person name="Kagan R."/>
            <person name="King L.M."/>
            <person name="Leal B."/>
            <person name="Lebow H."/>
            <person name="Lee S."/>
            <person name="LeVan J.M."/>
            <person name="Lewis L.C."/>
            <person name="London P."/>
            <person name="Lorensuhewa L.M."/>
            <person name="Loulseged H."/>
            <person name="Lovett D.A."/>
            <person name="Lucier A."/>
            <person name="Lucier R.L."/>
            <person name="Ma J."/>
            <person name="Madu R.C."/>
            <person name="Mapua P."/>
            <person name="Martindale A.D."/>
            <person name="Martinez E."/>
            <person name="Massey E."/>
            <person name="Mawhiney S."/>
            <person name="Meador M.G."/>
            <person name="Mendez S."/>
            <person name="Mercado C."/>
            <person name="Mercado I.C."/>
            <person name="Merritt C.E."/>
            <person name="Miner Z.L."/>
            <person name="Minja E."/>
            <person name="Mitchell T."/>
            <person name="Mohabbat F."/>
            <person name="Mohabbat K."/>
            <person name="Montgomery B."/>
            <person name="Moore N."/>
            <person name="Morris S."/>
            <person name="Munidasa M."/>
            <person name="Ngo R.N."/>
            <person name="Nguyen N.B."/>
            <person name="Nickerson E."/>
            <person name="Nwaokelemeh O.O."/>
            <person name="Nwokenkwo S."/>
            <person name="Obregon M."/>
            <person name="Oguh M."/>
            <person name="Oragunye N."/>
            <person name="Oviedo R.J."/>
            <person name="Parish B.J."/>
            <person name="Parker D.N."/>
            <person name="Parrish J."/>
            <person name="Parks K.L."/>
            <person name="Paul H.A."/>
            <person name="Payton B.A."/>
            <person name="Perez A."/>
            <person name="Perrin W."/>
            <person name="Pickens A."/>
            <person name="Primus E.L."/>
            <person name="Pu L.-L."/>
            <person name="Puazo M."/>
            <person name="Quiles M.M."/>
            <person name="Quiroz J.B."/>
            <person name="Rabata D."/>
            <person name="Reeves K."/>
            <person name="Ruiz S.J."/>
            <person name="Shao H."/>
            <person name="Sisson I."/>
            <person name="Sonaike T."/>
            <person name="Sorelle R.P."/>
            <person name="Sutton A.E."/>
            <person name="Svatek A.F."/>
            <person name="Svetz L.A."/>
            <person name="Tamerisa K.S."/>
            <person name="Taylor T.R."/>
            <person name="Teague B."/>
            <person name="Thomas N."/>
            <person name="Thorn R.D."/>
            <person name="Trejos Z.Y."/>
            <person name="Trevino B.K."/>
            <person name="Ukegbu O.N."/>
            <person name="Urban J.B."/>
            <person name="Vasquez L.I."/>
            <person name="Vera V.A."/>
            <person name="Villasana D.M."/>
            <person name="Wang L."/>
            <person name="Ward-Moore S."/>
            <person name="Warren J.T."/>
            <person name="Wei X."/>
            <person name="White F."/>
            <person name="Williamson A.L."/>
            <person name="Wleczyk R."/>
            <person name="Wooden H.S."/>
            <person name="Wooden S.H."/>
            <person name="Yen J."/>
            <person name="Yoon L."/>
            <person name="Yoon V."/>
            <person name="Zorrilla S.E."/>
            <person name="Nelson D."/>
            <person name="Kucherlapati R."/>
            <person name="Weinstock G."/>
            <person name="Gibbs R.A."/>
        </authorList>
    </citation>
    <scope>NUCLEOTIDE SEQUENCE [LARGE SCALE GENOMIC DNA]</scope>
</reference>
<reference key="5">
    <citation type="submission" date="2005-07" db="EMBL/GenBank/DDBJ databases">
        <authorList>
            <person name="Mural R.J."/>
            <person name="Istrail S."/>
            <person name="Sutton G."/>
            <person name="Florea L."/>
            <person name="Halpern A.L."/>
            <person name="Mobarry C.M."/>
            <person name="Lippert R."/>
            <person name="Walenz B."/>
            <person name="Shatkay H."/>
            <person name="Dew I."/>
            <person name="Miller J.R."/>
            <person name="Flanigan M.J."/>
            <person name="Edwards N.J."/>
            <person name="Bolanos R."/>
            <person name="Fasulo D."/>
            <person name="Halldorsson B.V."/>
            <person name="Hannenhalli S."/>
            <person name="Turner R."/>
            <person name="Yooseph S."/>
            <person name="Lu F."/>
            <person name="Nusskern D.R."/>
            <person name="Shue B.C."/>
            <person name="Zheng X.H."/>
            <person name="Zhong F."/>
            <person name="Delcher A.L."/>
            <person name="Huson D.H."/>
            <person name="Kravitz S.A."/>
            <person name="Mouchard L."/>
            <person name="Reinert K."/>
            <person name="Remington K.A."/>
            <person name="Clark A.G."/>
            <person name="Waterman M.S."/>
            <person name="Eichler E.E."/>
            <person name="Adams M.D."/>
            <person name="Hunkapiller M.W."/>
            <person name="Myers E.W."/>
            <person name="Venter J.C."/>
        </authorList>
    </citation>
    <scope>NUCLEOTIDE SEQUENCE [LARGE SCALE GENOMIC DNA]</scope>
</reference>
<reference key="6">
    <citation type="submission" date="2007-07" db="UniProtKB">
        <authorList>
            <person name="Bienvenut W.V."/>
            <person name="Heiserich L."/>
            <person name="Boulahbel H."/>
            <person name="Gottlieb E."/>
        </authorList>
    </citation>
    <scope>PROTEIN SEQUENCE OF 1-11; 166-178; 205-216 AND 494-503</scope>
    <scope>ACETYLATION AT MET-1</scope>
    <scope>IDENTIFICATION BY MASS SPECTROMETRY</scope>
    <source>
        <tissue>Colon carcinoma</tissue>
    </source>
</reference>
<reference key="7">
    <citation type="journal article" date="2004" name="Anal. Chem.">
        <title>Robust phosphoproteomic profiling of tyrosine phosphorylation sites from human T cells using immobilized metal affinity chromatography and tandem mass spectrometry.</title>
        <authorList>
            <person name="Brill L.M."/>
            <person name="Salomon A.R."/>
            <person name="Ficarro S.B."/>
            <person name="Mukherji M."/>
            <person name="Stettler-Gill M."/>
            <person name="Peters E.C."/>
        </authorList>
    </citation>
    <scope>PHOSPHORYLATION [LARGE SCALE ANALYSIS] AT SER-722</scope>
    <scope>IDENTIFICATION BY MASS SPECTROMETRY [LARGE SCALE ANALYSIS]</scope>
    <source>
        <tissue>Leukemic T-cell</tissue>
    </source>
</reference>
<reference key="8">
    <citation type="journal article" date="2006" name="Cell">
        <title>Global, in vivo, and site-specific phosphorylation dynamics in signaling networks.</title>
        <authorList>
            <person name="Olsen J.V."/>
            <person name="Blagoev B."/>
            <person name="Gnad F."/>
            <person name="Macek B."/>
            <person name="Kumar C."/>
            <person name="Mortensen P."/>
            <person name="Mann M."/>
        </authorList>
    </citation>
    <scope>IDENTIFICATION BY MASS SPECTROMETRY [LARGE SCALE ANALYSIS]</scope>
    <source>
        <tissue>Cervix carcinoma</tissue>
    </source>
</reference>
<reference key="9">
    <citation type="journal article" date="2006" name="Nat. Biotechnol.">
        <title>A probability-based approach for high-throughput protein phosphorylation analysis and site localization.</title>
        <authorList>
            <person name="Beausoleil S.A."/>
            <person name="Villen J."/>
            <person name="Gerber S.A."/>
            <person name="Rush J."/>
            <person name="Gygi S.P."/>
        </authorList>
    </citation>
    <scope>IDENTIFICATION BY MASS SPECTROMETRY [LARGE SCALE ANALYSIS]</scope>
    <source>
        <tissue>Cervix carcinoma</tissue>
    </source>
</reference>
<reference key="10">
    <citation type="journal article" date="2008" name="Mol. Cell">
        <title>Kinase-selective enrichment enables quantitative phosphoproteomics of the kinome across the cell cycle.</title>
        <authorList>
            <person name="Daub H."/>
            <person name="Olsen J.V."/>
            <person name="Bairlein M."/>
            <person name="Gnad F."/>
            <person name="Oppermann F.S."/>
            <person name="Korner R."/>
            <person name="Greff Z."/>
            <person name="Keri G."/>
            <person name="Stemmann O."/>
            <person name="Mann M."/>
        </authorList>
    </citation>
    <scope>IDENTIFICATION BY MASS SPECTROMETRY [LARGE SCALE ANALYSIS]</scope>
    <source>
        <tissue>Cervix carcinoma</tissue>
    </source>
</reference>
<reference key="11">
    <citation type="journal article" date="2008" name="Proc. Natl. Acad. Sci. U.S.A.">
        <title>A quantitative atlas of mitotic phosphorylation.</title>
        <authorList>
            <person name="Dephoure N."/>
            <person name="Zhou C."/>
            <person name="Villen J."/>
            <person name="Beausoleil S.A."/>
            <person name="Bakalarski C.E."/>
            <person name="Elledge S.J."/>
            <person name="Gygi S.P."/>
        </authorList>
    </citation>
    <scope>PHOSPHORYLATION [LARGE SCALE ANALYSIS] AT SER-392; SER-583 AND SER-722</scope>
    <scope>IDENTIFICATION BY MASS SPECTROMETRY [LARGE SCALE ANALYSIS]</scope>
    <source>
        <tissue>Cervix carcinoma</tissue>
    </source>
</reference>
<reference key="12">
    <citation type="journal article" date="2009" name="Anal. Chem.">
        <title>Lys-N and trypsin cover complementary parts of the phosphoproteome in a refined SCX-based approach.</title>
        <authorList>
            <person name="Gauci S."/>
            <person name="Helbig A.O."/>
            <person name="Slijper M."/>
            <person name="Krijgsveld J."/>
            <person name="Heck A.J."/>
            <person name="Mohammed S."/>
        </authorList>
    </citation>
    <scope>ACETYLATION [LARGE SCALE ANALYSIS] AT MET-1</scope>
    <scope>IDENTIFICATION BY MASS SPECTROMETRY [LARGE SCALE ANALYSIS]</scope>
</reference>
<reference key="13">
    <citation type="journal article" date="2009" name="Sci. Signal.">
        <title>Quantitative phosphoproteomic analysis of T cell receptor signaling reveals system-wide modulation of protein-protein interactions.</title>
        <authorList>
            <person name="Mayya V."/>
            <person name="Lundgren D.H."/>
            <person name="Hwang S.-I."/>
            <person name="Rezaul K."/>
            <person name="Wu L."/>
            <person name="Eng J.K."/>
            <person name="Rodionov V."/>
            <person name="Han D.K."/>
        </authorList>
    </citation>
    <scope>PHOSPHORYLATION [LARGE SCALE ANALYSIS] AT SER-392</scope>
    <scope>IDENTIFICATION BY MASS SPECTROMETRY [LARGE SCALE ANALYSIS]</scope>
    <source>
        <tissue>Leukemic T-cell</tissue>
    </source>
</reference>
<reference key="14">
    <citation type="journal article" date="2010" name="Sci. Signal.">
        <title>Quantitative phosphoproteomics reveals widespread full phosphorylation site occupancy during mitosis.</title>
        <authorList>
            <person name="Olsen J.V."/>
            <person name="Vermeulen M."/>
            <person name="Santamaria A."/>
            <person name="Kumar C."/>
            <person name="Miller M.L."/>
            <person name="Jensen L.J."/>
            <person name="Gnad F."/>
            <person name="Cox J."/>
            <person name="Jensen T.S."/>
            <person name="Nigg E.A."/>
            <person name="Brunak S."/>
            <person name="Mann M."/>
        </authorList>
    </citation>
    <scope>PHOSPHORYLATION [LARGE SCALE ANALYSIS] AT SER-583 AND SER-722</scope>
    <scope>IDENTIFICATION BY MASS SPECTROMETRY [LARGE SCALE ANALYSIS]</scope>
    <source>
        <tissue>Cervix carcinoma</tissue>
    </source>
</reference>
<reference key="15">
    <citation type="journal article" date="2011" name="BMC Biol.">
        <title>Identification and characterization of a set of conserved and new regulators of cytoskeletal organisation, cell morphology and migration.</title>
        <authorList>
            <person name="Bai S.W."/>
            <person name="Herrera-Abreu M.T."/>
            <person name="Rohn J.L."/>
            <person name="Racine V."/>
            <person name="Tajadura V."/>
            <person name="Suryavanshi N."/>
            <person name="Bechtel S."/>
            <person name="Wiemann S."/>
            <person name="Baum B."/>
            <person name="Ridley A.J."/>
        </authorList>
    </citation>
    <scope>FUNCTION</scope>
</reference>
<reference key="16">
    <citation type="journal article" date="2011" name="BMC Syst. Biol.">
        <title>Initial characterization of the human central proteome.</title>
        <authorList>
            <person name="Burkard T.R."/>
            <person name="Planyavsky M."/>
            <person name="Kaupe I."/>
            <person name="Breitwieser F.P."/>
            <person name="Buerckstuemmer T."/>
            <person name="Bennett K.L."/>
            <person name="Superti-Furga G."/>
            <person name="Colinge J."/>
        </authorList>
    </citation>
    <scope>IDENTIFICATION BY MASS SPECTROMETRY [LARGE SCALE ANALYSIS]</scope>
</reference>
<reference key="17">
    <citation type="journal article" date="2011" name="Sci. Signal.">
        <title>System-wide temporal characterization of the proteome and phosphoproteome of human embryonic stem cell differentiation.</title>
        <authorList>
            <person name="Rigbolt K.T."/>
            <person name="Prokhorova T.A."/>
            <person name="Akimov V."/>
            <person name="Henningsen J."/>
            <person name="Johansen P.T."/>
            <person name="Kratchmarova I."/>
            <person name="Kassem M."/>
            <person name="Mann M."/>
            <person name="Olsen J.V."/>
            <person name="Blagoev B."/>
        </authorList>
    </citation>
    <scope>PHOSPHORYLATION [LARGE SCALE ANALYSIS] AT SER-583; SER-647 AND THR-649</scope>
    <scope>IDENTIFICATION BY MASS SPECTROMETRY [LARGE SCALE ANALYSIS]</scope>
</reference>
<reference key="18">
    <citation type="journal article" date="2013" name="J. Proteome Res.">
        <title>Toward a comprehensive characterization of a human cancer cell phosphoproteome.</title>
        <authorList>
            <person name="Zhou H."/>
            <person name="Di Palma S."/>
            <person name="Preisinger C."/>
            <person name="Peng M."/>
            <person name="Polat A.N."/>
            <person name="Heck A.J."/>
            <person name="Mohammed S."/>
        </authorList>
    </citation>
    <scope>PHOSPHORYLATION [LARGE SCALE ANALYSIS] AT SER-392; SER-505; SER-583; SER-597 AND SER-722</scope>
    <scope>IDENTIFICATION BY MASS SPECTROMETRY [LARGE SCALE ANALYSIS]</scope>
    <source>
        <tissue>Cervix carcinoma</tissue>
        <tissue>Erythroleukemia</tissue>
    </source>
</reference>
<reference key="19">
    <citation type="journal article" date="2014" name="J. Proteomics">
        <title>An enzyme assisted RP-RPLC approach for in-depth analysis of human liver phosphoproteome.</title>
        <authorList>
            <person name="Bian Y."/>
            <person name="Song C."/>
            <person name="Cheng K."/>
            <person name="Dong M."/>
            <person name="Wang F."/>
            <person name="Huang J."/>
            <person name="Sun D."/>
            <person name="Wang L."/>
            <person name="Ye M."/>
            <person name="Zou H."/>
        </authorList>
    </citation>
    <scope>PHOSPHORYLATION [LARGE SCALE ANALYSIS] AT THR-578; THR-579 AND SER-722</scope>
    <scope>IDENTIFICATION BY MASS SPECTROMETRY [LARGE SCALE ANALYSIS]</scope>
    <source>
        <tissue>Liver</tissue>
    </source>
</reference>
<reference key="20">
    <citation type="journal article" date="2014" name="Mol. Cell. Proteomics">
        <title>Immunoaffinity enrichment and mass spectrometry analysis of protein methylation.</title>
        <authorList>
            <person name="Guo A."/>
            <person name="Gu H."/>
            <person name="Zhou J."/>
            <person name="Mulhern D."/>
            <person name="Wang Y."/>
            <person name="Lee K.A."/>
            <person name="Yang V."/>
            <person name="Aguiar M."/>
            <person name="Kornhauser J."/>
            <person name="Jia X."/>
            <person name="Ren J."/>
            <person name="Beausoleil S.A."/>
            <person name="Silva J.C."/>
            <person name="Vemulapalli V."/>
            <person name="Bedford M.T."/>
            <person name="Comb M.J."/>
        </authorList>
    </citation>
    <scope>METHYLATION [LARGE SCALE ANALYSIS] AT ARG-368 AND ARG-686</scope>
    <scope>IDENTIFICATION BY MASS SPECTROMETRY [LARGE SCALE ANALYSIS]</scope>
    <source>
        <tissue>Colon carcinoma</tissue>
    </source>
</reference>
<reference key="21">
    <citation type="journal article" date="2016" name="Cytoskeleton">
        <title>The RNA-binding protein LARP4 regulates cancer cell migration and invasion.</title>
        <authorList>
            <person name="Seetharaman S."/>
            <person name="Flemyng E."/>
            <person name="Shen J."/>
            <person name="Conte M.R."/>
            <person name="Ridley A.J."/>
        </authorList>
    </citation>
    <scope>FUNCTION</scope>
    <scope>SUBCELLULAR LOCATIONINTERACTION WITH PABPC1</scope>
</reference>
<reference key="22">
    <citation type="submission" date="2005-11" db="PDB data bank">
        <title>Solution structure of the La domain of c-mpl binding protein.</title>
        <authorList>
            <consortium name="RIKEN structural genomics initiative (RSGI)"/>
        </authorList>
    </citation>
    <scope>STRUCTURE BY NMR OF 112-199</scope>
</reference>
<reference key="23">
    <citation type="journal article" date="2011" name="Mol. Cell. Biol.">
        <title>La-related protein 4 binds poly(A), interacts with the poly(A)-binding protein MLLE domain via a variant PAM2w motif, and can promote mRNA stability.</title>
        <authorList>
            <person name="Yang R."/>
            <person name="Gaidamakov S.A."/>
            <person name="Xie J."/>
            <person name="Lee J."/>
            <person name="Martino L."/>
            <person name="Kozlov G."/>
            <person name="Crawford A.K."/>
            <person name="Russo A.N."/>
            <person name="Conte M.R."/>
            <person name="Gehring K."/>
            <person name="Maraia R.J."/>
        </authorList>
    </citation>
    <scope>X-RAY CRYSTALLOGRAPHY (1.80 ANGSTROMS) OF 13-26 IN COMPLEX WITH PABPC1</scope>
    <scope>INTERACTION WITH PABPC1 AND RACK1</scope>
    <scope>SUBCELLULAR LOCATION</scope>
    <scope>MUTAGENESIS OF LEU-15 AND TRP-22</scope>
</reference>
<protein>
    <recommendedName>
        <fullName>La-related protein 4</fullName>
    </recommendedName>
    <alternativeName>
        <fullName>La ribonucleoprotein domain family member 4</fullName>
    </alternativeName>
</protein>
<name>LARP4_HUMAN</name>
<organism>
    <name type="scientific">Homo sapiens</name>
    <name type="common">Human</name>
    <dbReference type="NCBI Taxonomy" id="9606"/>
    <lineage>
        <taxon>Eukaryota</taxon>
        <taxon>Metazoa</taxon>
        <taxon>Chordata</taxon>
        <taxon>Craniata</taxon>
        <taxon>Vertebrata</taxon>
        <taxon>Euteleostomi</taxon>
        <taxon>Mammalia</taxon>
        <taxon>Eutheria</taxon>
        <taxon>Euarchontoglires</taxon>
        <taxon>Primates</taxon>
        <taxon>Haplorrhini</taxon>
        <taxon>Catarrhini</taxon>
        <taxon>Hominidae</taxon>
        <taxon>Homo</taxon>
    </lineage>
</organism>
<dbReference type="EMBL" id="AK055521">
    <property type="protein sequence ID" value="BAB70940.1"/>
    <property type="molecule type" value="mRNA"/>
</dbReference>
<dbReference type="EMBL" id="AK125113">
    <property type="protein sequence ID" value="BAC86052.1"/>
    <property type="status" value="ALT_INIT"/>
    <property type="molecule type" value="mRNA"/>
</dbReference>
<dbReference type="EMBL" id="AK291746">
    <property type="protein sequence ID" value="BAF84435.1"/>
    <property type="molecule type" value="mRNA"/>
</dbReference>
<dbReference type="EMBL" id="AF370416">
    <property type="protein sequence ID" value="AAQ15252.1"/>
    <property type="molecule type" value="mRNA"/>
</dbReference>
<dbReference type="EMBL" id="BX647457">
    <property type="status" value="NOT_ANNOTATED_CDS"/>
    <property type="molecule type" value="mRNA"/>
</dbReference>
<dbReference type="EMBL" id="CR936626">
    <property type="protein sequence ID" value="CAI56769.1"/>
    <property type="molecule type" value="mRNA"/>
</dbReference>
<dbReference type="EMBL" id="AC090058">
    <property type="status" value="NOT_ANNOTATED_CDS"/>
    <property type="molecule type" value="Genomic_DNA"/>
</dbReference>
<dbReference type="EMBL" id="CH471111">
    <property type="protein sequence ID" value="EAW58146.1"/>
    <property type="molecule type" value="Genomic_DNA"/>
</dbReference>
<dbReference type="EMBL" id="CH471111">
    <property type="protein sequence ID" value="EAW58148.1"/>
    <property type="molecule type" value="Genomic_DNA"/>
</dbReference>
<dbReference type="CCDS" id="CCDS41782.1">
    <molecule id="Q71RC2-1"/>
</dbReference>
<dbReference type="CCDS" id="CCDS44879.2">
    <molecule id="Q71RC2-3"/>
</dbReference>
<dbReference type="CCDS" id="CCDS44880.1">
    <molecule id="Q71RC2-5"/>
</dbReference>
<dbReference type="CCDS" id="CCDS53789.1">
    <molecule id="Q71RC2-7"/>
</dbReference>
<dbReference type="CCDS" id="CCDS53790.1">
    <molecule id="Q71RC2-6"/>
</dbReference>
<dbReference type="CCDS" id="CCDS81690.1">
    <molecule id="Q71RC2-4"/>
</dbReference>
<dbReference type="RefSeq" id="NP_001164275.1">
    <molecule id="Q71RC2-7"/>
    <property type="nucleotide sequence ID" value="NM_001170804.2"/>
</dbReference>
<dbReference type="RefSeq" id="NP_001164279.1">
    <molecule id="Q71RC2-6"/>
    <property type="nucleotide sequence ID" value="NM_001170808.2"/>
</dbReference>
<dbReference type="RefSeq" id="NP_001317344.1">
    <molecule id="Q71RC2-4"/>
    <property type="nucleotide sequence ID" value="NM_001330415.2"/>
</dbReference>
<dbReference type="RefSeq" id="NP_443111.4">
    <molecule id="Q71RC2-1"/>
    <property type="nucleotide sequence ID" value="NM_052879.4"/>
</dbReference>
<dbReference type="RefSeq" id="NP_954658.2">
    <molecule id="Q71RC2-3"/>
    <property type="nucleotide sequence ID" value="NM_199188.3"/>
</dbReference>
<dbReference type="RefSeq" id="NP_954660.1">
    <molecule id="Q71RC2-5"/>
    <property type="nucleotide sequence ID" value="NM_199190.3"/>
</dbReference>
<dbReference type="RefSeq" id="XP_005268670.1">
    <property type="nucleotide sequence ID" value="XM_005268613.2"/>
</dbReference>
<dbReference type="RefSeq" id="XP_011536140.1">
    <property type="nucleotide sequence ID" value="XM_011537838.2"/>
</dbReference>
<dbReference type="RefSeq" id="XP_011536141.1">
    <property type="nucleotide sequence ID" value="XM_011537839.2"/>
</dbReference>
<dbReference type="RefSeq" id="XP_011536142.1">
    <property type="nucleotide sequence ID" value="XM_011537840.2"/>
</dbReference>
<dbReference type="RefSeq" id="XP_011536143.1">
    <property type="nucleotide sequence ID" value="XM_011537841.2"/>
</dbReference>
<dbReference type="RefSeq" id="XP_016874240.1">
    <property type="nucleotide sequence ID" value="XM_017018751.1"/>
</dbReference>
<dbReference type="RefSeq" id="XP_016874241.1">
    <property type="nucleotide sequence ID" value="XM_017018752.1"/>
</dbReference>
<dbReference type="RefSeq" id="XP_016874242.1">
    <property type="nucleotide sequence ID" value="XM_017018753.1"/>
</dbReference>
<dbReference type="RefSeq" id="XP_016874243.1">
    <property type="nucleotide sequence ID" value="XM_017018754.1"/>
</dbReference>
<dbReference type="PDB" id="2CQK">
    <property type="method" value="NMR"/>
    <property type="chains" value="A=113-200"/>
</dbReference>
<dbReference type="PDB" id="3PKN">
    <property type="method" value="X-ray"/>
    <property type="resolution" value="1.80 A"/>
    <property type="chains" value="B=13-26"/>
</dbReference>
<dbReference type="PDB" id="6I9B">
    <property type="method" value="NMR"/>
    <property type="chains" value="A=111-287"/>
</dbReference>
<dbReference type="PDBsum" id="2CQK"/>
<dbReference type="PDBsum" id="3PKN"/>
<dbReference type="PDBsum" id="6I9B"/>
<dbReference type="SMR" id="Q71RC2"/>
<dbReference type="BioGRID" id="125238">
    <property type="interactions" value="236"/>
</dbReference>
<dbReference type="ELM" id="Q71RC2"/>
<dbReference type="FunCoup" id="Q71RC2">
    <property type="interactions" value="996"/>
</dbReference>
<dbReference type="IntAct" id="Q71RC2">
    <property type="interactions" value="198"/>
</dbReference>
<dbReference type="MINT" id="Q71RC2"/>
<dbReference type="STRING" id="9606.ENSP00000415464"/>
<dbReference type="GlyGen" id="Q71RC2">
    <property type="glycosylation" value="1 site, 1 O-linked glycan (1 site)"/>
</dbReference>
<dbReference type="iPTMnet" id="Q71RC2"/>
<dbReference type="MetOSite" id="Q71RC2"/>
<dbReference type="PhosphoSitePlus" id="Q71RC2"/>
<dbReference type="SwissPalm" id="Q71RC2"/>
<dbReference type="BioMuta" id="LARP4"/>
<dbReference type="DMDM" id="189047131"/>
<dbReference type="jPOST" id="Q71RC2"/>
<dbReference type="MassIVE" id="Q71RC2"/>
<dbReference type="PaxDb" id="9606-ENSP00000381490"/>
<dbReference type="PeptideAtlas" id="Q71RC2"/>
<dbReference type="ProteomicsDB" id="19660"/>
<dbReference type="ProteomicsDB" id="33696"/>
<dbReference type="ProteomicsDB" id="33856"/>
<dbReference type="ProteomicsDB" id="68610">
    <molecule id="Q71RC2-1"/>
</dbReference>
<dbReference type="ProteomicsDB" id="68611">
    <molecule id="Q71RC2-2"/>
</dbReference>
<dbReference type="ProteomicsDB" id="68612">
    <molecule id="Q71RC2-3"/>
</dbReference>
<dbReference type="ProteomicsDB" id="68613">
    <molecule id="Q71RC2-4"/>
</dbReference>
<dbReference type="Pumba" id="Q71RC2"/>
<dbReference type="Antibodypedia" id="26215">
    <property type="antibodies" value="155 antibodies from 24 providers"/>
</dbReference>
<dbReference type="DNASU" id="113251"/>
<dbReference type="Ensembl" id="ENST00000293618.12">
    <molecule id="Q71RC2-6"/>
    <property type="protein sequence ID" value="ENSP00000293618.8"/>
    <property type="gene ID" value="ENSG00000161813.23"/>
</dbReference>
<dbReference type="Ensembl" id="ENST00000347328.9">
    <molecule id="Q71RC2-5"/>
    <property type="protein sequence ID" value="ENSP00000340901.5"/>
    <property type="gene ID" value="ENSG00000161813.23"/>
</dbReference>
<dbReference type="Ensembl" id="ENST00000398473.7">
    <molecule id="Q71RC2-1"/>
    <property type="protein sequence ID" value="ENSP00000381490.2"/>
    <property type="gene ID" value="ENSG00000161813.23"/>
</dbReference>
<dbReference type="Ensembl" id="ENST00000429001.7">
    <molecule id="Q71RC2-4"/>
    <property type="protein sequence ID" value="ENSP00000415464.3"/>
    <property type="gene ID" value="ENSG00000161813.23"/>
</dbReference>
<dbReference type="Ensembl" id="ENST00000518444.5">
    <molecule id="Q71RC2-3"/>
    <property type="protein sequence ID" value="ENSP00000429077.1"/>
    <property type="gene ID" value="ENSG00000161813.23"/>
</dbReference>
<dbReference type="Ensembl" id="ENST00000522085.5">
    <molecule id="Q71RC2-7"/>
    <property type="protein sequence ID" value="ENSP00000429781.1"/>
    <property type="gene ID" value="ENSG00000161813.23"/>
</dbReference>
<dbReference type="GeneID" id="113251"/>
<dbReference type="KEGG" id="hsa:113251"/>
<dbReference type="MANE-Select" id="ENST00000398473.7">
    <property type="protein sequence ID" value="ENSP00000381490.2"/>
    <property type="RefSeq nucleotide sequence ID" value="NM_052879.5"/>
    <property type="RefSeq protein sequence ID" value="NP_443111.4"/>
</dbReference>
<dbReference type="UCSC" id="uc001rwm.4">
    <molecule id="Q71RC2-1"/>
    <property type="organism name" value="human"/>
</dbReference>
<dbReference type="AGR" id="HGNC:24320"/>
<dbReference type="CTD" id="113251"/>
<dbReference type="DisGeNET" id="113251"/>
<dbReference type="GeneCards" id="LARP4"/>
<dbReference type="HGNC" id="HGNC:24320">
    <property type="gene designation" value="LARP4"/>
</dbReference>
<dbReference type="HPA" id="ENSG00000161813">
    <property type="expression patterns" value="Low tissue specificity"/>
</dbReference>
<dbReference type="MIM" id="618657">
    <property type="type" value="gene"/>
</dbReference>
<dbReference type="neXtProt" id="NX_Q71RC2"/>
<dbReference type="OpenTargets" id="ENSG00000161813"/>
<dbReference type="PharmGKB" id="PA142671566"/>
<dbReference type="VEuPathDB" id="HostDB:ENSG00000161813"/>
<dbReference type="eggNOG" id="KOG2590">
    <property type="taxonomic scope" value="Eukaryota"/>
</dbReference>
<dbReference type="eggNOG" id="KOG2591">
    <property type="taxonomic scope" value="Eukaryota"/>
</dbReference>
<dbReference type="GeneTree" id="ENSGT00940000154409"/>
<dbReference type="HOGENOM" id="CLU_025110_0_0_1"/>
<dbReference type="InParanoid" id="Q71RC2"/>
<dbReference type="OMA" id="NPERMSE"/>
<dbReference type="OrthoDB" id="10046764at2759"/>
<dbReference type="PAN-GO" id="Q71RC2">
    <property type="GO annotations" value="3 GO annotations based on evolutionary models"/>
</dbReference>
<dbReference type="PhylomeDB" id="Q71RC2"/>
<dbReference type="TreeFam" id="TF321960"/>
<dbReference type="PathwayCommons" id="Q71RC2"/>
<dbReference type="SignaLink" id="Q71RC2"/>
<dbReference type="BioGRID-ORCS" id="113251">
    <property type="hits" value="82 hits in 1121 CRISPR screens"/>
</dbReference>
<dbReference type="CD-CODE" id="232F8A39">
    <property type="entry name" value="P-body"/>
</dbReference>
<dbReference type="CD-CODE" id="DEE660B4">
    <property type="entry name" value="Stress granule"/>
</dbReference>
<dbReference type="ChiTaRS" id="LARP4">
    <property type="organism name" value="human"/>
</dbReference>
<dbReference type="EvolutionaryTrace" id="Q71RC2"/>
<dbReference type="GeneWiki" id="LARP4"/>
<dbReference type="GenomeRNAi" id="113251"/>
<dbReference type="Pharos" id="Q71RC2">
    <property type="development level" value="Tbio"/>
</dbReference>
<dbReference type="PRO" id="PR:Q71RC2"/>
<dbReference type="Proteomes" id="UP000005640">
    <property type="component" value="Chromosome 12"/>
</dbReference>
<dbReference type="RNAct" id="Q71RC2">
    <property type="molecule type" value="protein"/>
</dbReference>
<dbReference type="Bgee" id="ENSG00000161813">
    <property type="expression patterns" value="Expressed in secondary oocyte and 210 other cell types or tissues"/>
</dbReference>
<dbReference type="ExpressionAtlas" id="Q71RC2">
    <property type="expression patterns" value="baseline and differential"/>
</dbReference>
<dbReference type="GO" id="GO:0010494">
    <property type="term" value="C:cytoplasmic stress granule"/>
    <property type="evidence" value="ECO:0007669"/>
    <property type="project" value="UniProtKB-SubCell"/>
</dbReference>
<dbReference type="GO" id="GO:0005829">
    <property type="term" value="C:cytosol"/>
    <property type="evidence" value="ECO:0000314"/>
    <property type="project" value="HPA"/>
</dbReference>
<dbReference type="GO" id="GO:0016020">
    <property type="term" value="C:membrane"/>
    <property type="evidence" value="ECO:0007005"/>
    <property type="project" value="UniProtKB"/>
</dbReference>
<dbReference type="GO" id="GO:0003730">
    <property type="term" value="F:mRNA 3'-UTR binding"/>
    <property type="evidence" value="ECO:0000314"/>
    <property type="project" value="FlyBase"/>
</dbReference>
<dbReference type="GO" id="GO:0008143">
    <property type="term" value="F:poly(A) binding"/>
    <property type="evidence" value="ECO:0000314"/>
    <property type="project" value="UniProtKB"/>
</dbReference>
<dbReference type="GO" id="GO:0003723">
    <property type="term" value="F:RNA binding"/>
    <property type="evidence" value="ECO:0007005"/>
    <property type="project" value="UniProtKB"/>
</dbReference>
<dbReference type="GO" id="GO:0007010">
    <property type="term" value="P:cytoskeleton organization"/>
    <property type="evidence" value="ECO:0000315"/>
    <property type="project" value="UniProtKB"/>
</dbReference>
<dbReference type="GO" id="GO:0045727">
    <property type="term" value="P:positive regulation of translation"/>
    <property type="evidence" value="ECO:0000315"/>
    <property type="project" value="UniProtKB"/>
</dbReference>
<dbReference type="GO" id="GO:0010608">
    <property type="term" value="P:post-transcriptional regulation of gene expression"/>
    <property type="evidence" value="ECO:0000314"/>
    <property type="project" value="FlyBase"/>
</dbReference>
<dbReference type="GO" id="GO:0022604">
    <property type="term" value="P:regulation of cell morphogenesis"/>
    <property type="evidence" value="ECO:0000315"/>
    <property type="project" value="UniProtKB"/>
</dbReference>
<dbReference type="GO" id="GO:0006412">
    <property type="term" value="P:translation"/>
    <property type="evidence" value="ECO:0007669"/>
    <property type="project" value="UniProtKB-KW"/>
</dbReference>
<dbReference type="CDD" id="cd08035">
    <property type="entry name" value="LARP_4"/>
    <property type="match status" value="1"/>
</dbReference>
<dbReference type="CDD" id="cd12707">
    <property type="entry name" value="RRM_LARP4"/>
    <property type="match status" value="1"/>
</dbReference>
<dbReference type="FunFam" id="1.10.10.10:FF:000144">
    <property type="entry name" value="la-related protein 4 isoform X2"/>
    <property type="match status" value="1"/>
</dbReference>
<dbReference type="Gene3D" id="1.10.10.10">
    <property type="entry name" value="Winged helix-like DNA-binding domain superfamily/Winged helix DNA-binding domain"/>
    <property type="match status" value="1"/>
</dbReference>
<dbReference type="IDEAL" id="IID00571"/>
<dbReference type="InterPro" id="IPR045180">
    <property type="entry name" value="La_dom_prot"/>
</dbReference>
<dbReference type="InterPro" id="IPR006630">
    <property type="entry name" value="La_HTH"/>
</dbReference>
<dbReference type="InterPro" id="IPR034903">
    <property type="entry name" value="LARP4_RRM"/>
</dbReference>
<dbReference type="InterPro" id="IPR035979">
    <property type="entry name" value="RBD_domain_sf"/>
</dbReference>
<dbReference type="InterPro" id="IPR036388">
    <property type="entry name" value="WH-like_DNA-bd_sf"/>
</dbReference>
<dbReference type="InterPro" id="IPR036390">
    <property type="entry name" value="WH_DNA-bd_sf"/>
</dbReference>
<dbReference type="PANTHER" id="PTHR22792:SF48">
    <property type="entry name" value="LA-RELATED PROTEIN 4"/>
    <property type="match status" value="1"/>
</dbReference>
<dbReference type="PANTHER" id="PTHR22792">
    <property type="entry name" value="LUPUS LA PROTEIN-RELATED"/>
    <property type="match status" value="1"/>
</dbReference>
<dbReference type="Pfam" id="PF05383">
    <property type="entry name" value="La"/>
    <property type="match status" value="1"/>
</dbReference>
<dbReference type="SMART" id="SM00715">
    <property type="entry name" value="LA"/>
    <property type="match status" value="1"/>
</dbReference>
<dbReference type="SUPFAM" id="SSF54928">
    <property type="entry name" value="RNA-binding domain, RBD"/>
    <property type="match status" value="1"/>
</dbReference>
<dbReference type="SUPFAM" id="SSF46785">
    <property type="entry name" value="Winged helix' DNA-binding domain"/>
    <property type="match status" value="1"/>
</dbReference>
<dbReference type="PROSITE" id="PS50961">
    <property type="entry name" value="HTH_LA"/>
    <property type="match status" value="1"/>
</dbReference>